<proteinExistence type="inferred from homology"/>
<dbReference type="EMBL" id="AF214972">
    <property type="protein sequence ID" value="AAG60400.1"/>
    <property type="molecule type" value="mRNA"/>
</dbReference>
<dbReference type="ConoServer" id="659">
    <property type="toxin name" value="Vn5.4 precursor"/>
</dbReference>
<dbReference type="GO" id="GO:0005576">
    <property type="term" value="C:extracellular region"/>
    <property type="evidence" value="ECO:0007669"/>
    <property type="project" value="UniProtKB-SubCell"/>
</dbReference>
<dbReference type="GO" id="GO:0090729">
    <property type="term" value="F:toxin activity"/>
    <property type="evidence" value="ECO:0007669"/>
    <property type="project" value="UniProtKB-KW"/>
</dbReference>
<dbReference type="InterPro" id="IPR031565">
    <property type="entry name" value="T-conotoxin"/>
</dbReference>
<dbReference type="Pfam" id="PF16981">
    <property type="entry name" value="Chi-conotoxin"/>
    <property type="match status" value="1"/>
</dbReference>
<comment type="subcellular location">
    <subcellularLocation>
        <location evidence="4">Secreted</location>
    </subcellularLocation>
</comment>
<comment type="tissue specificity">
    <text evidence="4">Expressed by the venom duct.</text>
</comment>
<comment type="domain">
    <text evidence="3">The cysteine framework is V (CC-CC).</text>
</comment>
<comment type="PTM">
    <text evidence="3">Contains 2 disulfide bonds that can be either 'C1-C3, C2-C4' or 'C1-C4, C2-C3', since these disulfide connectivities have been observed for conotoxins with cysteine framework V (for examples, see AC P0DQQ7 and AC P81755).</text>
</comment>
<comment type="similarity">
    <text evidence="3">Belongs to the conotoxin T superfamily.</text>
</comment>
<keyword id="KW-0027">Amidation</keyword>
<keyword id="KW-1015">Disulfide bond</keyword>
<keyword id="KW-0528">Neurotoxin</keyword>
<keyword id="KW-0964">Secreted</keyword>
<keyword id="KW-0732">Signal</keyword>
<keyword id="KW-0800">Toxin</keyword>
<evidence type="ECO:0000250" key="1"/>
<evidence type="ECO:0000255" key="2"/>
<evidence type="ECO:0000305" key="3"/>
<evidence type="ECO:0000305" key="4">
    <source>
    </source>
</evidence>
<evidence type="ECO:0000312" key="5">
    <source>
        <dbReference type="EMBL" id="AAG60400.1"/>
    </source>
</evidence>
<protein>
    <recommendedName>
        <fullName evidence="5">Conotoxin VnMRCL-04</fullName>
    </recommendedName>
</protein>
<name>CT54_CONVE</name>
<organism>
    <name type="scientific">Conus ventricosus</name>
    <name type="common">Mediterranean cone</name>
    <dbReference type="NCBI Taxonomy" id="117992"/>
    <lineage>
        <taxon>Eukaryota</taxon>
        <taxon>Metazoa</taxon>
        <taxon>Spiralia</taxon>
        <taxon>Lophotrochozoa</taxon>
        <taxon>Mollusca</taxon>
        <taxon>Gastropoda</taxon>
        <taxon>Caenogastropoda</taxon>
        <taxon>Neogastropoda</taxon>
        <taxon>Conoidea</taxon>
        <taxon>Conidae</taxon>
        <taxon>Conus</taxon>
        <taxon>Lautoconus</taxon>
    </lineage>
</organism>
<accession>Q9BPF7</accession>
<reference key="1">
    <citation type="journal article" date="2001" name="Mol. Biol. Evol.">
        <title>Mechanisms for evolving hypervariability: the case of conopeptides.</title>
        <authorList>
            <person name="Conticello S.G."/>
            <person name="Gilad Y."/>
            <person name="Avidan N."/>
            <person name="Ben-Asher E."/>
            <person name="Levy Z."/>
            <person name="Fainzilber M."/>
        </authorList>
    </citation>
    <scope>NUCLEOTIDE SEQUENCE [MRNA]</scope>
    <source>
        <tissue>Venom duct</tissue>
    </source>
</reference>
<feature type="signal peptide" evidence="2">
    <location>
        <begin position="1"/>
        <end position="22"/>
    </location>
</feature>
<feature type="propeptide" id="PRO_0000404962" evidence="1">
    <location>
        <begin position="23"/>
        <end position="48"/>
    </location>
</feature>
<feature type="peptide" id="PRO_0000404963" description="Conotoxin VnMRCL-04">
    <location>
        <begin position="49"/>
        <end position="63"/>
    </location>
</feature>
<feature type="modified residue" description="Tryptophan amide" evidence="1">
    <location>
        <position position="63"/>
    </location>
</feature>
<sequence>MRCLPVFVILLLLIASAPSVDARPKTKDDVPLASFHGNAERTLLNILRDGDNCCIDKQGCCPWG</sequence>